<reference key="1">
    <citation type="submission" date="2006-12" db="EMBL/GenBank/DDBJ databases">
        <title>Bifidobacterium adolescentis complete genome sequence.</title>
        <authorList>
            <person name="Suzuki T."/>
            <person name="Tsuda Y."/>
            <person name="Kanou N."/>
            <person name="Inoue T."/>
            <person name="Kumazaki K."/>
            <person name="Nagano S."/>
            <person name="Hirai S."/>
            <person name="Tanaka K."/>
            <person name="Watanabe K."/>
        </authorList>
    </citation>
    <scope>NUCLEOTIDE SEQUENCE [LARGE SCALE GENOMIC DNA]</scope>
    <source>
        <strain>ATCC 15703 / DSM 20083 / NCTC 11814 / E194a</strain>
    </source>
</reference>
<comment type="function">
    <text evidence="1">Catalyzes the attachment of glutamate to tRNA(Glu) in a two-step reaction: glutamate is first activated by ATP to form Glu-AMP and then transferred to the acceptor end of tRNA(Glu).</text>
</comment>
<comment type="catalytic activity">
    <reaction evidence="1">
        <text>tRNA(Glu) + L-glutamate + ATP = L-glutamyl-tRNA(Glu) + AMP + diphosphate</text>
        <dbReference type="Rhea" id="RHEA:23540"/>
        <dbReference type="Rhea" id="RHEA-COMP:9663"/>
        <dbReference type="Rhea" id="RHEA-COMP:9680"/>
        <dbReference type="ChEBI" id="CHEBI:29985"/>
        <dbReference type="ChEBI" id="CHEBI:30616"/>
        <dbReference type="ChEBI" id="CHEBI:33019"/>
        <dbReference type="ChEBI" id="CHEBI:78442"/>
        <dbReference type="ChEBI" id="CHEBI:78520"/>
        <dbReference type="ChEBI" id="CHEBI:456215"/>
        <dbReference type="EC" id="6.1.1.17"/>
    </reaction>
</comment>
<comment type="subunit">
    <text evidence="1">Monomer.</text>
</comment>
<comment type="subcellular location">
    <subcellularLocation>
        <location evidence="1">Cytoplasm</location>
    </subcellularLocation>
</comment>
<comment type="similarity">
    <text evidence="1">Belongs to the class-I aminoacyl-tRNA synthetase family. Glutamate--tRNA ligase type 1 subfamily.</text>
</comment>
<organism>
    <name type="scientific">Bifidobacterium adolescentis (strain ATCC 15703 / DSM 20083 / NCTC 11814 / E194a)</name>
    <dbReference type="NCBI Taxonomy" id="367928"/>
    <lineage>
        <taxon>Bacteria</taxon>
        <taxon>Bacillati</taxon>
        <taxon>Actinomycetota</taxon>
        <taxon>Actinomycetes</taxon>
        <taxon>Bifidobacteriales</taxon>
        <taxon>Bifidobacteriaceae</taxon>
        <taxon>Bifidobacterium</taxon>
    </lineage>
</organism>
<keyword id="KW-0030">Aminoacyl-tRNA synthetase</keyword>
<keyword id="KW-0067">ATP-binding</keyword>
<keyword id="KW-0963">Cytoplasm</keyword>
<keyword id="KW-0436">Ligase</keyword>
<keyword id="KW-0547">Nucleotide-binding</keyword>
<keyword id="KW-0648">Protein biosynthesis</keyword>
<keyword id="KW-1185">Reference proteome</keyword>
<evidence type="ECO:0000255" key="1">
    <source>
        <dbReference type="HAMAP-Rule" id="MF_00022"/>
    </source>
</evidence>
<sequence length="506" mass="56634">MTEVENTRPELPENVRVRFCPSPTGIPHVGMVRTALFNWAEARHTKGTFVFRIEDTDAQRDSEESYNQIIEALNWLGIDWDEGINVGGPDGPYRQSERGDIYKDVAAKLLEAGYAYESFSTPEEIEARNVAAGRPKAFGYDGYDRNLTEEQKAAFRAEGRKPALRIRMPDEDVAFDDLIRGRIEFKAGSVPDYVIVRPNGDPLYTLTNPVDDAMMRINVVLRGEDLLSSTPRQIVLYRYLIELGVAKEMPLFGHMPYVMGQGNKKLSKRDPESNLFLHRDNGFIREGLLNYLALLGWSIAPDRDVFSMDEMIEKFDVRDVKANPARFDVDKAISINAEHIRMLEPQDFLNRSVPYLHRDGVVSADSWDALTDREREVLTAAAPLVQPRVRLLGEVAGMVGSLLSTEGYIEPDADAKKQLKDSAPAVLDAAIAALDAVAEGDWKTDSLHETLNKALVEDGGYKPRLAFGPVRVAMSGRRVSPPLFESMEIVGKDVAMARLKGLREHL</sequence>
<protein>
    <recommendedName>
        <fullName evidence="1">Glutamate--tRNA ligase</fullName>
        <ecNumber evidence="1">6.1.1.17</ecNumber>
    </recommendedName>
    <alternativeName>
        <fullName evidence="1">Glutamyl-tRNA synthetase</fullName>
        <shortName evidence="1">GluRS</shortName>
    </alternativeName>
</protein>
<feature type="chain" id="PRO_0000367616" description="Glutamate--tRNA ligase">
    <location>
        <begin position="1"/>
        <end position="506"/>
    </location>
</feature>
<feature type="short sequence motif" description="'HIGH' region" evidence="1">
    <location>
        <begin position="21"/>
        <end position="31"/>
    </location>
</feature>
<feature type="short sequence motif" description="'KMSKS' region" evidence="1">
    <location>
        <begin position="265"/>
        <end position="269"/>
    </location>
</feature>
<feature type="binding site" evidence="1">
    <location>
        <position position="268"/>
    </location>
    <ligand>
        <name>ATP</name>
        <dbReference type="ChEBI" id="CHEBI:30616"/>
    </ligand>
</feature>
<proteinExistence type="inferred from homology"/>
<name>SYE_BIFAA</name>
<gene>
    <name evidence="1" type="primary">gltX</name>
    <name type="ordered locus">BAD_0176</name>
</gene>
<accession>A0ZZS4</accession>
<dbReference type="EC" id="6.1.1.17" evidence="1"/>
<dbReference type="EMBL" id="AP009256">
    <property type="protein sequence ID" value="BAF38957.1"/>
    <property type="molecule type" value="Genomic_DNA"/>
</dbReference>
<dbReference type="RefSeq" id="WP_011742711.1">
    <property type="nucleotide sequence ID" value="NC_008618.1"/>
</dbReference>
<dbReference type="SMR" id="A0ZZS4"/>
<dbReference type="STRING" id="367928.BAD_0176"/>
<dbReference type="PaxDb" id="1680-BADO_0184"/>
<dbReference type="GeneID" id="4556159"/>
<dbReference type="KEGG" id="bad:BAD_0176"/>
<dbReference type="HOGENOM" id="CLU_015768_6_1_11"/>
<dbReference type="Proteomes" id="UP000008702">
    <property type="component" value="Chromosome"/>
</dbReference>
<dbReference type="GO" id="GO:0005829">
    <property type="term" value="C:cytosol"/>
    <property type="evidence" value="ECO:0007669"/>
    <property type="project" value="TreeGrafter"/>
</dbReference>
<dbReference type="GO" id="GO:0005524">
    <property type="term" value="F:ATP binding"/>
    <property type="evidence" value="ECO:0007669"/>
    <property type="project" value="UniProtKB-UniRule"/>
</dbReference>
<dbReference type="GO" id="GO:0004818">
    <property type="term" value="F:glutamate-tRNA ligase activity"/>
    <property type="evidence" value="ECO:0007669"/>
    <property type="project" value="UniProtKB-UniRule"/>
</dbReference>
<dbReference type="GO" id="GO:0000049">
    <property type="term" value="F:tRNA binding"/>
    <property type="evidence" value="ECO:0007669"/>
    <property type="project" value="InterPro"/>
</dbReference>
<dbReference type="GO" id="GO:0008270">
    <property type="term" value="F:zinc ion binding"/>
    <property type="evidence" value="ECO:0007669"/>
    <property type="project" value="InterPro"/>
</dbReference>
<dbReference type="GO" id="GO:0006424">
    <property type="term" value="P:glutamyl-tRNA aminoacylation"/>
    <property type="evidence" value="ECO:0007669"/>
    <property type="project" value="UniProtKB-UniRule"/>
</dbReference>
<dbReference type="CDD" id="cd00808">
    <property type="entry name" value="GluRS_core"/>
    <property type="match status" value="1"/>
</dbReference>
<dbReference type="FunFam" id="3.40.50.620:FF:000149">
    <property type="entry name" value="Glutamate--tRNA ligase"/>
    <property type="match status" value="1"/>
</dbReference>
<dbReference type="Gene3D" id="1.10.10.350">
    <property type="match status" value="1"/>
</dbReference>
<dbReference type="Gene3D" id="1.10.8.70">
    <property type="entry name" value="Glutamate-tRNA synthetase, class I, anticodon-binding domain 1"/>
    <property type="match status" value="1"/>
</dbReference>
<dbReference type="Gene3D" id="1.10.1160.10">
    <property type="entry name" value="Glutamyl-trna Synthetase, Domain 2"/>
    <property type="match status" value="1"/>
</dbReference>
<dbReference type="Gene3D" id="3.90.800.10">
    <property type="entry name" value="Glutamyl-tRNA Synthetase, Domain 3"/>
    <property type="match status" value="1"/>
</dbReference>
<dbReference type="Gene3D" id="3.40.50.620">
    <property type="entry name" value="HUPs"/>
    <property type="match status" value="1"/>
</dbReference>
<dbReference type="HAMAP" id="MF_00022">
    <property type="entry name" value="Glu_tRNA_synth_type1"/>
    <property type="match status" value="1"/>
</dbReference>
<dbReference type="InterPro" id="IPR045462">
    <property type="entry name" value="aa-tRNA-synth_I_cd-bd"/>
</dbReference>
<dbReference type="InterPro" id="IPR020751">
    <property type="entry name" value="aa-tRNA-synth_I_codon-bd_sub2"/>
</dbReference>
<dbReference type="InterPro" id="IPR008925">
    <property type="entry name" value="aa_tRNA-synth_I_cd-bd_sf"/>
</dbReference>
<dbReference type="InterPro" id="IPR004527">
    <property type="entry name" value="Glu-tRNA-ligase_bac/mito"/>
</dbReference>
<dbReference type="InterPro" id="IPR020752">
    <property type="entry name" value="Glu-tRNA-synth_I_codon-bd_sub1"/>
</dbReference>
<dbReference type="InterPro" id="IPR000924">
    <property type="entry name" value="Glu/Gln-tRNA-synth"/>
</dbReference>
<dbReference type="InterPro" id="IPR020058">
    <property type="entry name" value="Glu/Gln-tRNA-synth_Ib_cat-dom"/>
</dbReference>
<dbReference type="InterPro" id="IPR020061">
    <property type="entry name" value="Glu_tRNA_lig_a-bdl"/>
</dbReference>
<dbReference type="InterPro" id="IPR049940">
    <property type="entry name" value="GluQ/Sye"/>
</dbReference>
<dbReference type="InterPro" id="IPR033910">
    <property type="entry name" value="GluRS_core"/>
</dbReference>
<dbReference type="InterPro" id="IPR014729">
    <property type="entry name" value="Rossmann-like_a/b/a_fold"/>
</dbReference>
<dbReference type="NCBIfam" id="TIGR00464">
    <property type="entry name" value="gltX_bact"/>
    <property type="match status" value="1"/>
</dbReference>
<dbReference type="PANTHER" id="PTHR43311">
    <property type="entry name" value="GLUTAMATE--TRNA LIGASE"/>
    <property type="match status" value="1"/>
</dbReference>
<dbReference type="PANTHER" id="PTHR43311:SF2">
    <property type="entry name" value="GLUTAMATE--TRNA LIGASE, MITOCHONDRIAL-RELATED"/>
    <property type="match status" value="1"/>
</dbReference>
<dbReference type="Pfam" id="PF19269">
    <property type="entry name" value="Anticodon_2"/>
    <property type="match status" value="1"/>
</dbReference>
<dbReference type="Pfam" id="PF00749">
    <property type="entry name" value="tRNA-synt_1c"/>
    <property type="match status" value="1"/>
</dbReference>
<dbReference type="PRINTS" id="PR00987">
    <property type="entry name" value="TRNASYNTHGLU"/>
</dbReference>
<dbReference type="SUPFAM" id="SSF48163">
    <property type="entry name" value="An anticodon-binding domain of class I aminoacyl-tRNA synthetases"/>
    <property type="match status" value="1"/>
</dbReference>
<dbReference type="SUPFAM" id="SSF52374">
    <property type="entry name" value="Nucleotidylyl transferase"/>
    <property type="match status" value="1"/>
</dbReference>